<accession>P49701</accession>
<comment type="function">
    <text evidence="1 2">Nuclear receptor for calcitriol, the active form of vitamin D3 which mediates the action of this vitamin on cells. Enters the nucleus upon vitamin D3 binding where it forms heterodimers with the retinoid X receptor/RXR. The VDR-RXR heterodimers bind to specific response elements on DNA and activate the transcription of vitamin D3-responsive target genes (By similarity). Plays a central role in calcium homeostasis (By similarity). Also functions as a receptor for the secondary bile acid lithocholic acid (LCA) and its metabolites (By similarity).</text>
</comment>
<comment type="subunit">
    <text evidence="1">Homodimer in the absence of bound vitamin D3. Heterodimer with RXRA after vitamin D3 binding.</text>
</comment>
<comment type="subcellular location">
    <subcellularLocation>
        <location evidence="1 3">Nucleus</location>
    </subcellularLocation>
    <subcellularLocation>
        <location evidence="1">Cytoplasm</location>
    </subcellularLocation>
    <text evidence="1">Localizes mainly to the nucleus. Translocated into the nucleus via both ligand-dependent and ligand-independent pathways; ligand-independent nuclear translocation is mediated by IPO4.</text>
</comment>
<comment type="alternative products">
    <event type="alternative initiation"/>
    <isoform>
        <id>P49701-1</id>
        <name>A</name>
        <sequence type="displayed"/>
    </isoform>
    <isoform>
        <id>P49701-2</id>
        <name>B</name>
        <sequence type="described" ref="VSP_018772"/>
    </isoform>
</comment>
<comment type="domain">
    <text evidence="1">Composed of three domains: a modulating N-terminal domain, a DNA-binding domain and a C-terminal ligand-binding domain.</text>
</comment>
<comment type="domain">
    <text evidence="1">The 9aaTAD motif is a transactivation domain present in a large number of yeast and animal transcription factors.</text>
</comment>
<comment type="similarity">
    <text evidence="6">Belongs to the nuclear hormone receptor family. NR1 subfamily.</text>
</comment>
<reference key="1">
    <citation type="journal article" date="1994" name="Proc. Natl. Acad. Sci. U.S.A.">
        <title>The avian vitamin D receptors: primary structures and their origins.</title>
        <authorList>
            <person name="Elaroussi M.A."/>
            <person name="Prahl J.M."/>
            <person name="Deluca H.F."/>
        </authorList>
    </citation>
    <scope>NUCLEOTIDE SEQUENCE [MRNA] (ISOFORMS A AND B)</scope>
    <source>
        <tissue>Chorioallantoic membrane</tissue>
    </source>
</reference>
<organism>
    <name type="scientific">Coturnix japonica</name>
    <name type="common">Japanese quail</name>
    <name type="synonym">Coturnix coturnix japonica</name>
    <dbReference type="NCBI Taxonomy" id="93934"/>
    <lineage>
        <taxon>Eukaryota</taxon>
        <taxon>Metazoa</taxon>
        <taxon>Chordata</taxon>
        <taxon>Craniata</taxon>
        <taxon>Vertebrata</taxon>
        <taxon>Euteleostomi</taxon>
        <taxon>Archelosauria</taxon>
        <taxon>Archosauria</taxon>
        <taxon>Dinosauria</taxon>
        <taxon>Saurischia</taxon>
        <taxon>Theropoda</taxon>
        <taxon>Coelurosauria</taxon>
        <taxon>Aves</taxon>
        <taxon>Neognathae</taxon>
        <taxon>Galloanserae</taxon>
        <taxon>Galliformes</taxon>
        <taxon>Phasianidae</taxon>
        <taxon>Perdicinae</taxon>
        <taxon>Coturnix</taxon>
    </lineage>
</organism>
<gene>
    <name type="primary">VDR</name>
    <name type="synonym">NR1I1</name>
</gene>
<sequence>MVSISASGGYAMPCCCESQELQSSDMETPAVGTPEFDRNVPRICGVCGDRATGFHFNAMTCEGCKGFFRRSMKRKAMFTCPFSGDCKITKDNRRHCQACRLKRCVDIGMMKEFILTDEEVQRKREMILKRKEEEALKESLKPKLSEEQQKVINILLEAHHKTFDTTYSDFNKFRPPVRSKFSSSTATHSSSVVSQDFSSEDSNDVFGSDAFGAFPEPMEPQMFSNLDLSEESDESPSMNIELPHLPMLPHLADLVSYSIQKVIGFAKMIPGFRDLTAEDQIALLKSSAIEVIMLRSNQSFTMEDMSWTCGSNDFKYKVSDVTQAGHSMDLLEPLVKFQVGLKKLNLHEEEHVLLMAICILSPDRPGVQDTSLVESIQDRLSDTLQTYIRCRHPPPGSRLLYAKMIQKLADLRSLNEEHSKQYRCLSFQPEHSMQLTPLVLEVFGNEIS</sequence>
<feature type="chain" id="PRO_0000019935" description="Vitamin D3 receptor">
    <location>
        <begin position="1"/>
        <end position="448"/>
    </location>
</feature>
<feature type="domain" description="NR LBD" evidence="4">
    <location>
        <begin position="147"/>
        <end position="444"/>
    </location>
</feature>
<feature type="DNA-binding region" description="Nuclear receptor" evidence="3">
    <location>
        <begin position="41"/>
        <end position="116"/>
    </location>
</feature>
<feature type="zinc finger region" description="NR C4-type" evidence="3">
    <location>
        <begin position="44"/>
        <end position="64"/>
    </location>
</feature>
<feature type="zinc finger region" description="NR C4-type" evidence="3">
    <location>
        <begin position="80"/>
        <end position="104"/>
    </location>
</feature>
<feature type="region of interest" description="Hinge" evidence="1">
    <location>
        <begin position="117"/>
        <end position="146"/>
    </location>
</feature>
<feature type="region of interest" description="Interaction with coactivator LXXLL motif" evidence="2">
    <location>
        <begin position="267"/>
        <end position="285"/>
    </location>
</feature>
<feature type="short sequence motif" description="9aaTAD" evidence="1">
    <location>
        <begin position="437"/>
        <end position="445"/>
    </location>
</feature>
<feature type="binding site" evidence="1">
    <location>
        <position position="44"/>
    </location>
    <ligand>
        <name>Zn(2+)</name>
        <dbReference type="ChEBI" id="CHEBI:29105"/>
        <label>1</label>
    </ligand>
</feature>
<feature type="binding site" evidence="1">
    <location>
        <position position="47"/>
    </location>
    <ligand>
        <name>Zn(2+)</name>
        <dbReference type="ChEBI" id="CHEBI:29105"/>
        <label>1</label>
    </ligand>
</feature>
<feature type="binding site" evidence="1">
    <location>
        <position position="61"/>
    </location>
    <ligand>
        <name>Zn(2+)</name>
        <dbReference type="ChEBI" id="CHEBI:29105"/>
        <label>1</label>
    </ligand>
</feature>
<feature type="binding site" evidence="1">
    <location>
        <position position="64"/>
    </location>
    <ligand>
        <name>Zn(2+)</name>
        <dbReference type="ChEBI" id="CHEBI:29105"/>
        <label>1</label>
    </ligand>
</feature>
<feature type="binding site" evidence="1">
    <location>
        <position position="80"/>
    </location>
    <ligand>
        <name>Zn(2+)</name>
        <dbReference type="ChEBI" id="CHEBI:29105"/>
        <label>2</label>
    </ligand>
</feature>
<feature type="binding site" evidence="1">
    <location>
        <position position="86"/>
    </location>
    <ligand>
        <name>Zn(2+)</name>
        <dbReference type="ChEBI" id="CHEBI:29105"/>
        <label>2</label>
    </ligand>
</feature>
<feature type="binding site" evidence="1">
    <location>
        <position position="96"/>
    </location>
    <ligand>
        <name>Zn(2+)</name>
        <dbReference type="ChEBI" id="CHEBI:29105"/>
        <label>2</label>
    </ligand>
</feature>
<feature type="binding site" evidence="1">
    <location>
        <position position="99"/>
    </location>
    <ligand>
        <name>Zn(2+)</name>
        <dbReference type="ChEBI" id="CHEBI:29105"/>
        <label>2</label>
    </ligand>
</feature>
<feature type="binding site" evidence="1">
    <location>
        <position position="258"/>
    </location>
    <ligand>
        <name>calcitriol</name>
        <dbReference type="ChEBI" id="CHEBI:17823"/>
    </ligand>
</feature>
<feature type="binding site" evidence="1">
    <location>
        <position position="295"/>
    </location>
    <ligand>
        <name>calcitriol</name>
        <dbReference type="ChEBI" id="CHEBI:17823"/>
    </ligand>
</feature>
<feature type="binding site" evidence="1">
    <location>
        <position position="299"/>
    </location>
    <ligand>
        <name>calcitriol</name>
        <dbReference type="ChEBI" id="CHEBI:17823"/>
    </ligand>
</feature>
<feature type="binding site" evidence="1">
    <location>
        <position position="326"/>
    </location>
    <ligand>
        <name>calcitriol</name>
        <dbReference type="ChEBI" id="CHEBI:17823"/>
    </ligand>
</feature>
<feature type="binding site" evidence="1">
    <location>
        <position position="418"/>
    </location>
    <ligand>
        <name>calcitriol</name>
        <dbReference type="ChEBI" id="CHEBI:17823"/>
    </ligand>
</feature>
<feature type="splice variant" id="VSP_018772" description="In isoform B." evidence="5">
    <location>
        <begin position="1"/>
        <end position="25"/>
    </location>
</feature>
<dbReference type="EMBL" id="U12641">
    <property type="protein sequence ID" value="AAA56725.1"/>
    <property type="molecule type" value="mRNA"/>
</dbReference>
<dbReference type="PIR" id="I50451">
    <property type="entry name" value="I50451"/>
</dbReference>
<dbReference type="RefSeq" id="NP_001310170.1">
    <molecule id="P49701-1"/>
    <property type="nucleotide sequence ID" value="NM_001323241.1"/>
</dbReference>
<dbReference type="SMR" id="P49701"/>
<dbReference type="GeneID" id="107306955"/>
<dbReference type="KEGG" id="cjo:107306955"/>
<dbReference type="CTD" id="7421"/>
<dbReference type="OrthoDB" id="6352325at2759"/>
<dbReference type="Proteomes" id="UP000694412">
    <property type="component" value="Unplaced"/>
</dbReference>
<dbReference type="GO" id="GO:0005737">
    <property type="term" value="C:cytoplasm"/>
    <property type="evidence" value="ECO:0007669"/>
    <property type="project" value="UniProtKB-SubCell"/>
</dbReference>
<dbReference type="GO" id="GO:0005634">
    <property type="term" value="C:nucleus"/>
    <property type="evidence" value="ECO:0007669"/>
    <property type="project" value="UniProtKB-SubCell"/>
</dbReference>
<dbReference type="GO" id="GO:0004879">
    <property type="term" value="F:nuclear receptor activity"/>
    <property type="evidence" value="ECO:0000250"/>
    <property type="project" value="UniProtKB"/>
</dbReference>
<dbReference type="GO" id="GO:0070644">
    <property type="term" value="F:vitamin D response element binding"/>
    <property type="evidence" value="ECO:0007669"/>
    <property type="project" value="TreeGrafter"/>
</dbReference>
<dbReference type="GO" id="GO:0008270">
    <property type="term" value="F:zinc ion binding"/>
    <property type="evidence" value="ECO:0007669"/>
    <property type="project" value="UniProtKB-KW"/>
</dbReference>
<dbReference type="GO" id="GO:0030154">
    <property type="term" value="P:cell differentiation"/>
    <property type="evidence" value="ECO:0007669"/>
    <property type="project" value="TreeGrafter"/>
</dbReference>
<dbReference type="GO" id="GO:0000122">
    <property type="term" value="P:negative regulation of transcription by RNA polymerase II"/>
    <property type="evidence" value="ECO:0007669"/>
    <property type="project" value="TreeGrafter"/>
</dbReference>
<dbReference type="GO" id="GO:0045944">
    <property type="term" value="P:positive regulation of transcription by RNA polymerase II"/>
    <property type="evidence" value="ECO:0007669"/>
    <property type="project" value="TreeGrafter"/>
</dbReference>
<dbReference type="GO" id="GO:0070561">
    <property type="term" value="P:vitamin D receptor signaling pathway"/>
    <property type="evidence" value="ECO:0000250"/>
    <property type="project" value="UniProtKB"/>
</dbReference>
<dbReference type="CDD" id="cd06955">
    <property type="entry name" value="NR_DBD_VDR"/>
    <property type="match status" value="1"/>
</dbReference>
<dbReference type="CDD" id="cd06933">
    <property type="entry name" value="NR_LBD_VDR"/>
    <property type="match status" value="1"/>
</dbReference>
<dbReference type="FunFam" id="3.30.50.10:FF:000023">
    <property type="entry name" value="Vitamin D3 receptor"/>
    <property type="match status" value="1"/>
</dbReference>
<dbReference type="FunFam" id="1.10.565.10:FF:000021">
    <property type="entry name" value="Vitamin D3 receptor B"/>
    <property type="match status" value="1"/>
</dbReference>
<dbReference type="Gene3D" id="3.30.50.10">
    <property type="entry name" value="Erythroid Transcription Factor GATA-1, subunit A"/>
    <property type="match status" value="1"/>
</dbReference>
<dbReference type="Gene3D" id="1.10.565.10">
    <property type="entry name" value="Retinoid X Receptor"/>
    <property type="match status" value="1"/>
</dbReference>
<dbReference type="InterPro" id="IPR042153">
    <property type="entry name" value="DBD_VDR"/>
</dbReference>
<dbReference type="InterPro" id="IPR035500">
    <property type="entry name" value="NHR-like_dom_sf"/>
</dbReference>
<dbReference type="InterPro" id="IPR000536">
    <property type="entry name" value="Nucl_hrmn_rcpt_lig-bd"/>
</dbReference>
<dbReference type="InterPro" id="IPR050234">
    <property type="entry name" value="Nuclear_hormone_rcpt_NR1"/>
</dbReference>
<dbReference type="InterPro" id="IPR001723">
    <property type="entry name" value="Nuclear_hrmn_rcpt"/>
</dbReference>
<dbReference type="InterPro" id="IPR000324">
    <property type="entry name" value="VitD_rcpt"/>
</dbReference>
<dbReference type="InterPro" id="IPR001628">
    <property type="entry name" value="Znf_hrmn_rcpt"/>
</dbReference>
<dbReference type="InterPro" id="IPR013088">
    <property type="entry name" value="Znf_NHR/GATA"/>
</dbReference>
<dbReference type="PANTHER" id="PTHR24082">
    <property type="entry name" value="NUCLEAR HORMONE RECEPTOR"/>
    <property type="match status" value="1"/>
</dbReference>
<dbReference type="PANTHER" id="PTHR24082:SF38">
    <property type="entry name" value="VITAMIN D3 RECEPTOR"/>
    <property type="match status" value="1"/>
</dbReference>
<dbReference type="Pfam" id="PF00104">
    <property type="entry name" value="Hormone_recep"/>
    <property type="match status" value="1"/>
</dbReference>
<dbReference type="Pfam" id="PF00105">
    <property type="entry name" value="zf-C4"/>
    <property type="match status" value="1"/>
</dbReference>
<dbReference type="PRINTS" id="PR00398">
    <property type="entry name" value="STRDHORMONER"/>
</dbReference>
<dbReference type="PRINTS" id="PR00047">
    <property type="entry name" value="STROIDFINGER"/>
</dbReference>
<dbReference type="PRINTS" id="PR00350">
    <property type="entry name" value="VITAMINDR"/>
</dbReference>
<dbReference type="SMART" id="SM00430">
    <property type="entry name" value="HOLI"/>
    <property type="match status" value="1"/>
</dbReference>
<dbReference type="SMART" id="SM00399">
    <property type="entry name" value="ZnF_C4"/>
    <property type="match status" value="1"/>
</dbReference>
<dbReference type="SUPFAM" id="SSF57716">
    <property type="entry name" value="Glucocorticoid receptor-like (DNA-binding domain)"/>
    <property type="match status" value="1"/>
</dbReference>
<dbReference type="SUPFAM" id="SSF48508">
    <property type="entry name" value="Nuclear receptor ligand-binding domain"/>
    <property type="match status" value="1"/>
</dbReference>
<dbReference type="PROSITE" id="PS51843">
    <property type="entry name" value="NR_LBD"/>
    <property type="match status" value="1"/>
</dbReference>
<dbReference type="PROSITE" id="PS00031">
    <property type="entry name" value="NUCLEAR_REC_DBD_1"/>
    <property type="match status" value="1"/>
</dbReference>
<dbReference type="PROSITE" id="PS51030">
    <property type="entry name" value="NUCLEAR_REC_DBD_2"/>
    <property type="match status" value="1"/>
</dbReference>
<evidence type="ECO:0000250" key="1">
    <source>
        <dbReference type="UniProtKB" id="P11473"/>
    </source>
</evidence>
<evidence type="ECO:0000250" key="2">
    <source>
        <dbReference type="UniProtKB" id="P13053"/>
    </source>
</evidence>
<evidence type="ECO:0000255" key="3">
    <source>
        <dbReference type="PROSITE-ProRule" id="PRU00407"/>
    </source>
</evidence>
<evidence type="ECO:0000255" key="4">
    <source>
        <dbReference type="PROSITE-ProRule" id="PRU01189"/>
    </source>
</evidence>
<evidence type="ECO:0000303" key="5">
    <source>
    </source>
</evidence>
<evidence type="ECO:0000305" key="6"/>
<protein>
    <recommendedName>
        <fullName>Vitamin D3 receptor</fullName>
        <shortName>VDR</shortName>
    </recommendedName>
    <alternativeName>
        <fullName>1,25-dihydroxyvitamin D3 receptor</fullName>
    </alternativeName>
    <alternativeName>
        <fullName>Nuclear receptor subfamily 1 group I member 1</fullName>
    </alternativeName>
</protein>
<keyword id="KW-0024">Alternative initiation</keyword>
<keyword id="KW-0963">Cytoplasm</keyword>
<keyword id="KW-0238">DNA-binding</keyword>
<keyword id="KW-0479">Metal-binding</keyword>
<keyword id="KW-0539">Nucleus</keyword>
<keyword id="KW-0675">Receptor</keyword>
<keyword id="KW-1185">Reference proteome</keyword>
<keyword id="KW-0804">Transcription</keyword>
<keyword id="KW-0805">Transcription regulation</keyword>
<keyword id="KW-0862">Zinc</keyword>
<keyword id="KW-0863">Zinc-finger</keyword>
<name>VDR_COTJA</name>
<proteinExistence type="evidence at transcript level"/>